<gene>
    <name evidence="1" type="primary">rpsS</name>
    <name type="ordered locus">Acry_1942</name>
</gene>
<name>RS19_ACICJ</name>
<protein>
    <recommendedName>
        <fullName evidence="1">Small ribosomal subunit protein uS19</fullName>
    </recommendedName>
    <alternativeName>
        <fullName evidence="2">30S ribosomal protein S19</fullName>
    </alternativeName>
</protein>
<keyword id="KW-1185">Reference proteome</keyword>
<keyword id="KW-0687">Ribonucleoprotein</keyword>
<keyword id="KW-0689">Ribosomal protein</keyword>
<keyword id="KW-0694">RNA-binding</keyword>
<keyword id="KW-0699">rRNA-binding</keyword>
<reference key="1">
    <citation type="submission" date="2007-05" db="EMBL/GenBank/DDBJ databases">
        <title>Complete sequence of chromosome of Acidiphilium cryptum JF-5.</title>
        <authorList>
            <consortium name="US DOE Joint Genome Institute"/>
            <person name="Copeland A."/>
            <person name="Lucas S."/>
            <person name="Lapidus A."/>
            <person name="Barry K."/>
            <person name="Detter J.C."/>
            <person name="Glavina del Rio T."/>
            <person name="Hammon N."/>
            <person name="Israni S."/>
            <person name="Dalin E."/>
            <person name="Tice H."/>
            <person name="Pitluck S."/>
            <person name="Sims D."/>
            <person name="Brettin T."/>
            <person name="Bruce D."/>
            <person name="Han C."/>
            <person name="Schmutz J."/>
            <person name="Larimer F."/>
            <person name="Land M."/>
            <person name="Hauser L."/>
            <person name="Kyrpides N."/>
            <person name="Kim E."/>
            <person name="Magnuson T."/>
            <person name="Richardson P."/>
        </authorList>
    </citation>
    <scope>NUCLEOTIDE SEQUENCE [LARGE SCALE GENOMIC DNA]</scope>
    <source>
        <strain>JF-5</strain>
    </source>
</reference>
<feature type="chain" id="PRO_1000051004" description="Small ribosomal subunit protein uS19">
    <location>
        <begin position="1"/>
        <end position="92"/>
    </location>
</feature>
<proteinExistence type="inferred from homology"/>
<organism>
    <name type="scientific">Acidiphilium cryptum (strain JF-5)</name>
    <dbReference type="NCBI Taxonomy" id="349163"/>
    <lineage>
        <taxon>Bacteria</taxon>
        <taxon>Pseudomonadati</taxon>
        <taxon>Pseudomonadota</taxon>
        <taxon>Alphaproteobacteria</taxon>
        <taxon>Acetobacterales</taxon>
        <taxon>Acidocellaceae</taxon>
        <taxon>Acidiphilium</taxon>
    </lineage>
</organism>
<sequence>MTRSVWKGPFVDGYMLNKADASRASGRNEIIKIWSRRSTILPQFVGLTFGVYNGRKFLPVQVTENMVGHKFGEFSPTRTFNGHAADKKAKRG</sequence>
<dbReference type="EMBL" id="CP000697">
    <property type="protein sequence ID" value="ABQ31143.1"/>
    <property type="molecule type" value="Genomic_DNA"/>
</dbReference>
<dbReference type="RefSeq" id="WP_007424177.1">
    <property type="nucleotide sequence ID" value="NC_009484.1"/>
</dbReference>
<dbReference type="SMR" id="A5FZW1"/>
<dbReference type="STRING" id="349163.Acry_1942"/>
<dbReference type="KEGG" id="acr:Acry_1942"/>
<dbReference type="eggNOG" id="COG0185">
    <property type="taxonomic scope" value="Bacteria"/>
</dbReference>
<dbReference type="HOGENOM" id="CLU_144911_0_1_5"/>
<dbReference type="Proteomes" id="UP000000245">
    <property type="component" value="Chromosome"/>
</dbReference>
<dbReference type="GO" id="GO:0005737">
    <property type="term" value="C:cytoplasm"/>
    <property type="evidence" value="ECO:0007669"/>
    <property type="project" value="UniProtKB-ARBA"/>
</dbReference>
<dbReference type="GO" id="GO:0015935">
    <property type="term" value="C:small ribosomal subunit"/>
    <property type="evidence" value="ECO:0007669"/>
    <property type="project" value="InterPro"/>
</dbReference>
<dbReference type="GO" id="GO:0019843">
    <property type="term" value="F:rRNA binding"/>
    <property type="evidence" value="ECO:0007669"/>
    <property type="project" value="UniProtKB-UniRule"/>
</dbReference>
<dbReference type="GO" id="GO:0003735">
    <property type="term" value="F:structural constituent of ribosome"/>
    <property type="evidence" value="ECO:0007669"/>
    <property type="project" value="InterPro"/>
</dbReference>
<dbReference type="GO" id="GO:0000028">
    <property type="term" value="P:ribosomal small subunit assembly"/>
    <property type="evidence" value="ECO:0007669"/>
    <property type="project" value="TreeGrafter"/>
</dbReference>
<dbReference type="GO" id="GO:0006412">
    <property type="term" value="P:translation"/>
    <property type="evidence" value="ECO:0007669"/>
    <property type="project" value="UniProtKB-UniRule"/>
</dbReference>
<dbReference type="FunFam" id="3.30.860.10:FF:000001">
    <property type="entry name" value="30S ribosomal protein S19"/>
    <property type="match status" value="1"/>
</dbReference>
<dbReference type="Gene3D" id="3.30.860.10">
    <property type="entry name" value="30s Ribosomal Protein S19, Chain A"/>
    <property type="match status" value="1"/>
</dbReference>
<dbReference type="HAMAP" id="MF_00531">
    <property type="entry name" value="Ribosomal_uS19"/>
    <property type="match status" value="1"/>
</dbReference>
<dbReference type="InterPro" id="IPR002222">
    <property type="entry name" value="Ribosomal_uS19"/>
</dbReference>
<dbReference type="InterPro" id="IPR005732">
    <property type="entry name" value="Ribosomal_uS19_bac-type"/>
</dbReference>
<dbReference type="InterPro" id="IPR020934">
    <property type="entry name" value="Ribosomal_uS19_CS"/>
</dbReference>
<dbReference type="InterPro" id="IPR023575">
    <property type="entry name" value="Ribosomal_uS19_SF"/>
</dbReference>
<dbReference type="NCBIfam" id="TIGR01050">
    <property type="entry name" value="rpsS_bact"/>
    <property type="match status" value="1"/>
</dbReference>
<dbReference type="PANTHER" id="PTHR11880">
    <property type="entry name" value="RIBOSOMAL PROTEIN S19P FAMILY MEMBER"/>
    <property type="match status" value="1"/>
</dbReference>
<dbReference type="PANTHER" id="PTHR11880:SF8">
    <property type="entry name" value="SMALL RIBOSOMAL SUBUNIT PROTEIN US19M"/>
    <property type="match status" value="1"/>
</dbReference>
<dbReference type="Pfam" id="PF00203">
    <property type="entry name" value="Ribosomal_S19"/>
    <property type="match status" value="1"/>
</dbReference>
<dbReference type="PIRSF" id="PIRSF002144">
    <property type="entry name" value="Ribosomal_S19"/>
    <property type="match status" value="1"/>
</dbReference>
<dbReference type="PRINTS" id="PR00975">
    <property type="entry name" value="RIBOSOMALS19"/>
</dbReference>
<dbReference type="SUPFAM" id="SSF54570">
    <property type="entry name" value="Ribosomal protein S19"/>
    <property type="match status" value="1"/>
</dbReference>
<dbReference type="PROSITE" id="PS00323">
    <property type="entry name" value="RIBOSOMAL_S19"/>
    <property type="match status" value="1"/>
</dbReference>
<accession>A5FZW1</accession>
<comment type="function">
    <text evidence="1">Protein S19 forms a complex with S13 that binds strongly to the 16S ribosomal RNA.</text>
</comment>
<comment type="similarity">
    <text evidence="1">Belongs to the universal ribosomal protein uS19 family.</text>
</comment>
<evidence type="ECO:0000255" key="1">
    <source>
        <dbReference type="HAMAP-Rule" id="MF_00531"/>
    </source>
</evidence>
<evidence type="ECO:0000305" key="2"/>